<comment type="function">
    <text evidence="1">Converts 2C-methyl-D-erythritol 2,4-cyclodiphosphate (ME-2,4cPP) into 1-hydroxy-2-methyl-2-(E)-butenyl 4-diphosphate.</text>
</comment>
<comment type="catalytic activity">
    <reaction evidence="1">
        <text>(2E)-4-hydroxy-3-methylbut-2-enyl diphosphate + oxidized [flavodoxin] + H2O + 2 H(+) = 2-C-methyl-D-erythritol 2,4-cyclic diphosphate + reduced [flavodoxin]</text>
        <dbReference type="Rhea" id="RHEA:43604"/>
        <dbReference type="Rhea" id="RHEA-COMP:10622"/>
        <dbReference type="Rhea" id="RHEA-COMP:10623"/>
        <dbReference type="ChEBI" id="CHEBI:15377"/>
        <dbReference type="ChEBI" id="CHEBI:15378"/>
        <dbReference type="ChEBI" id="CHEBI:57618"/>
        <dbReference type="ChEBI" id="CHEBI:58210"/>
        <dbReference type="ChEBI" id="CHEBI:58483"/>
        <dbReference type="ChEBI" id="CHEBI:128753"/>
        <dbReference type="EC" id="1.17.7.3"/>
    </reaction>
</comment>
<comment type="cofactor">
    <cofactor evidence="1">
        <name>[4Fe-4S] cluster</name>
        <dbReference type="ChEBI" id="CHEBI:49883"/>
    </cofactor>
    <text evidence="1">Binds 1 [4Fe-4S] cluster.</text>
</comment>
<comment type="pathway">
    <text evidence="1">Isoprenoid biosynthesis; isopentenyl diphosphate biosynthesis via DXP pathway; isopentenyl diphosphate from 1-deoxy-D-xylulose 5-phosphate: step 5/6.</text>
</comment>
<comment type="similarity">
    <text evidence="1">Belongs to the IspG family.</text>
</comment>
<proteinExistence type="inferred from homology"/>
<feature type="chain" id="PRO_0000190634" description="4-hydroxy-3-methylbut-2-en-1-yl diphosphate synthase (flavodoxin) 2">
    <location>
        <begin position="1"/>
        <end position="385"/>
    </location>
</feature>
<feature type="binding site" evidence="1">
    <location>
        <position position="281"/>
    </location>
    <ligand>
        <name>[4Fe-4S] cluster</name>
        <dbReference type="ChEBI" id="CHEBI:49883"/>
    </ligand>
</feature>
<feature type="binding site" evidence="1">
    <location>
        <position position="284"/>
    </location>
    <ligand>
        <name>[4Fe-4S] cluster</name>
        <dbReference type="ChEBI" id="CHEBI:49883"/>
    </ligand>
</feature>
<feature type="binding site" evidence="1">
    <location>
        <position position="316"/>
    </location>
    <ligand>
        <name>[4Fe-4S] cluster</name>
        <dbReference type="ChEBI" id="CHEBI:49883"/>
    </ligand>
</feature>
<feature type="binding site" evidence="1">
    <location>
        <position position="323"/>
    </location>
    <ligand>
        <name>[4Fe-4S] cluster</name>
        <dbReference type="ChEBI" id="CHEBI:49883"/>
    </ligand>
</feature>
<accession>Q82ML3</accession>
<reference key="1">
    <citation type="journal article" date="2001" name="Proc. Natl. Acad. Sci. U.S.A.">
        <title>Genome sequence of an industrial microorganism Streptomyces avermitilis: deducing the ability of producing secondary metabolites.</title>
        <authorList>
            <person name="Omura S."/>
            <person name="Ikeda H."/>
            <person name="Ishikawa J."/>
            <person name="Hanamoto A."/>
            <person name="Takahashi C."/>
            <person name="Shinose M."/>
            <person name="Takahashi Y."/>
            <person name="Horikawa H."/>
            <person name="Nakazawa H."/>
            <person name="Osonoe T."/>
            <person name="Kikuchi H."/>
            <person name="Shiba T."/>
            <person name="Sakaki Y."/>
            <person name="Hattori M."/>
        </authorList>
    </citation>
    <scope>NUCLEOTIDE SEQUENCE [LARGE SCALE GENOMIC DNA]</scope>
    <source>
        <strain>ATCC 31267 / DSM 46492 / JCM 5070 / NBRC 14893 / NCIMB 12804 / NRRL 8165 / MA-4680</strain>
    </source>
</reference>
<reference key="2">
    <citation type="journal article" date="2003" name="Nat. Biotechnol.">
        <title>Complete genome sequence and comparative analysis of the industrial microorganism Streptomyces avermitilis.</title>
        <authorList>
            <person name="Ikeda H."/>
            <person name="Ishikawa J."/>
            <person name="Hanamoto A."/>
            <person name="Shinose M."/>
            <person name="Kikuchi H."/>
            <person name="Shiba T."/>
            <person name="Sakaki Y."/>
            <person name="Hattori M."/>
            <person name="Omura S."/>
        </authorList>
    </citation>
    <scope>NUCLEOTIDE SEQUENCE [LARGE SCALE GENOMIC DNA]</scope>
    <source>
        <strain>ATCC 31267 / DSM 46492 / JCM 5070 / NBRC 14893 / NCIMB 12804 / NRRL 8165 / MA-4680</strain>
    </source>
</reference>
<dbReference type="EC" id="1.17.7.3" evidence="1"/>
<dbReference type="EMBL" id="BA000030">
    <property type="protein sequence ID" value="BAC69358.1"/>
    <property type="molecule type" value="Genomic_DNA"/>
</dbReference>
<dbReference type="SMR" id="Q82ML3"/>
<dbReference type="GeneID" id="41538747"/>
<dbReference type="KEGG" id="sma:SAVERM_1647"/>
<dbReference type="eggNOG" id="COG0821">
    <property type="taxonomic scope" value="Bacteria"/>
</dbReference>
<dbReference type="HOGENOM" id="CLU_042258_0_0_11"/>
<dbReference type="OrthoDB" id="9803214at2"/>
<dbReference type="UniPathway" id="UPA00056">
    <property type="reaction ID" value="UER00096"/>
</dbReference>
<dbReference type="Proteomes" id="UP000000428">
    <property type="component" value="Chromosome"/>
</dbReference>
<dbReference type="GO" id="GO:0051539">
    <property type="term" value="F:4 iron, 4 sulfur cluster binding"/>
    <property type="evidence" value="ECO:0007669"/>
    <property type="project" value="UniProtKB-UniRule"/>
</dbReference>
<dbReference type="GO" id="GO:0046429">
    <property type="term" value="F:4-hydroxy-3-methylbut-2-en-1-yl diphosphate synthase activity (ferredoxin)"/>
    <property type="evidence" value="ECO:0007669"/>
    <property type="project" value="UniProtKB-UniRule"/>
</dbReference>
<dbReference type="GO" id="GO:0141197">
    <property type="term" value="F:4-hydroxy-3-methylbut-2-enyl-diphosphate synthase activity (flavodoxin)"/>
    <property type="evidence" value="ECO:0007669"/>
    <property type="project" value="UniProtKB-EC"/>
</dbReference>
<dbReference type="GO" id="GO:0005506">
    <property type="term" value="F:iron ion binding"/>
    <property type="evidence" value="ECO:0007669"/>
    <property type="project" value="InterPro"/>
</dbReference>
<dbReference type="GO" id="GO:0019288">
    <property type="term" value="P:isopentenyl diphosphate biosynthetic process, methylerythritol 4-phosphate pathway"/>
    <property type="evidence" value="ECO:0007669"/>
    <property type="project" value="UniProtKB-UniRule"/>
</dbReference>
<dbReference type="GO" id="GO:0016114">
    <property type="term" value="P:terpenoid biosynthetic process"/>
    <property type="evidence" value="ECO:0007669"/>
    <property type="project" value="InterPro"/>
</dbReference>
<dbReference type="FunFam" id="3.20.20.20:FF:000003">
    <property type="entry name" value="4-hydroxy-3-methylbut-2-en-1-yl diphosphate synthase (flavodoxin)"/>
    <property type="match status" value="1"/>
</dbReference>
<dbReference type="FunFam" id="3.30.413.10:FF:000001">
    <property type="entry name" value="4-hydroxy-3-methylbut-2-en-1-yl diphosphate synthase (flavodoxin)"/>
    <property type="match status" value="1"/>
</dbReference>
<dbReference type="Gene3D" id="3.20.20.20">
    <property type="entry name" value="Dihydropteroate synthase-like"/>
    <property type="match status" value="1"/>
</dbReference>
<dbReference type="Gene3D" id="3.30.413.10">
    <property type="entry name" value="Sulfite Reductase Hemoprotein, domain 1"/>
    <property type="match status" value="1"/>
</dbReference>
<dbReference type="HAMAP" id="MF_00159">
    <property type="entry name" value="IspG"/>
    <property type="match status" value="1"/>
</dbReference>
<dbReference type="InterPro" id="IPR011005">
    <property type="entry name" value="Dihydropteroate_synth-like_sf"/>
</dbReference>
<dbReference type="InterPro" id="IPR016425">
    <property type="entry name" value="IspG_bac"/>
</dbReference>
<dbReference type="InterPro" id="IPR004588">
    <property type="entry name" value="IspG_bac-typ"/>
</dbReference>
<dbReference type="InterPro" id="IPR045854">
    <property type="entry name" value="NO2/SO3_Rdtase_4Fe4S_sf"/>
</dbReference>
<dbReference type="NCBIfam" id="TIGR00612">
    <property type="entry name" value="ispG_gcpE"/>
    <property type="match status" value="1"/>
</dbReference>
<dbReference type="NCBIfam" id="NF001540">
    <property type="entry name" value="PRK00366.1"/>
    <property type="match status" value="1"/>
</dbReference>
<dbReference type="PANTHER" id="PTHR30454">
    <property type="entry name" value="4-HYDROXY-3-METHYLBUT-2-EN-1-YL DIPHOSPHATE SYNTHASE"/>
    <property type="match status" value="1"/>
</dbReference>
<dbReference type="PANTHER" id="PTHR30454:SF0">
    <property type="entry name" value="4-HYDROXY-3-METHYLBUT-2-EN-1-YL DIPHOSPHATE SYNTHASE (FERREDOXIN), CHLOROPLASTIC"/>
    <property type="match status" value="1"/>
</dbReference>
<dbReference type="Pfam" id="PF04551">
    <property type="entry name" value="GcpE"/>
    <property type="match status" value="1"/>
</dbReference>
<dbReference type="PIRSF" id="PIRSF004640">
    <property type="entry name" value="IspG"/>
    <property type="match status" value="1"/>
</dbReference>
<dbReference type="SUPFAM" id="SSF51717">
    <property type="entry name" value="Dihydropteroate synthetase-like"/>
    <property type="match status" value="1"/>
</dbReference>
<dbReference type="SUPFAM" id="SSF56014">
    <property type="entry name" value="Nitrite and sulphite reductase 4Fe-4S domain-like"/>
    <property type="match status" value="1"/>
</dbReference>
<protein>
    <recommendedName>
        <fullName evidence="1">4-hydroxy-3-methylbut-2-en-1-yl diphosphate synthase (flavodoxin) 2</fullName>
        <ecNumber evidence="1">1.17.7.3</ecNumber>
    </recommendedName>
    <alternativeName>
        <fullName evidence="1">1-hydroxy-2-methyl-2-(E)-butenyl 4-diphosphate synthase 2</fullName>
    </alternativeName>
</protein>
<name>ISPG2_STRAW</name>
<evidence type="ECO:0000255" key="1">
    <source>
        <dbReference type="HAMAP-Rule" id="MF_00159"/>
    </source>
</evidence>
<organism>
    <name type="scientific">Streptomyces avermitilis (strain ATCC 31267 / DSM 46492 / JCM 5070 / NBRC 14893 / NCIMB 12804 / NRRL 8165 / MA-4680)</name>
    <dbReference type="NCBI Taxonomy" id="227882"/>
    <lineage>
        <taxon>Bacteria</taxon>
        <taxon>Bacillati</taxon>
        <taxon>Actinomycetota</taxon>
        <taxon>Actinomycetes</taxon>
        <taxon>Kitasatosporales</taxon>
        <taxon>Streptomycetaceae</taxon>
        <taxon>Streptomyces</taxon>
    </lineage>
</organism>
<gene>
    <name evidence="1" type="primary">ispG2</name>
    <name type="ordered locus">SAV_1647</name>
</gene>
<keyword id="KW-0004">4Fe-4S</keyword>
<keyword id="KW-0408">Iron</keyword>
<keyword id="KW-0411">Iron-sulfur</keyword>
<keyword id="KW-0414">Isoprene biosynthesis</keyword>
<keyword id="KW-0479">Metal-binding</keyword>
<keyword id="KW-0560">Oxidoreductase</keyword>
<keyword id="KW-1185">Reference proteome</keyword>
<sequence>MTAISLGVPEVPVRPIAERRVSRQIQVGPLAVGGTAPVSVQSMTTTRTSDIGATLQQIAELTASGCQIVRVACPTQDDADALAVIARKSQIPVVADIHFQPKYVFAAIEAGCAAVRVNPGNIKQFDDKVKEIARAAKEHGTPIRIGVNAGSLDRRLLEKYGKATPEALVESALWEASLFEEHDFRDIKISVKHNDPVVMVNAYRQLAAQCDYPLHLGVTEAGPAFQGTIKSAVAFGALLSEGIGDTIRVSLSAPPVEEIKVGIQILESLGLRQRRLEIVSCPSCGRAQVDVYKLAEEVTAGLEGMEVPLRVAVMGCVVNGPGEAREADLGVASGNGKGQIFVKGEVIKTVPESKIVETLIEEAMKIAEQMEQNGVASGEPAVTVS</sequence>